<organism>
    <name type="scientific">Acinetobacter baumannii (strain AYE)</name>
    <dbReference type="NCBI Taxonomy" id="509173"/>
    <lineage>
        <taxon>Bacteria</taxon>
        <taxon>Pseudomonadati</taxon>
        <taxon>Pseudomonadota</taxon>
        <taxon>Gammaproteobacteria</taxon>
        <taxon>Moraxellales</taxon>
        <taxon>Moraxellaceae</taxon>
        <taxon>Acinetobacter</taxon>
        <taxon>Acinetobacter calcoaceticus/baumannii complex</taxon>
    </lineage>
</organism>
<accession>B0V6W2</accession>
<sequence>MAKVEQNEGLVEKLVAVDRVAKVVKGGRIFSFTALTVVGDGNGRVGFGRGKAREVPAAISKALEAARRNMITVDLAGTTLQHPVNARHGASRVYMQPASEGTGVIAGGAMRAVLEAAGVHNVLAKCYGSTNAANVVNATFKGLRDMTSPEKVAAKRGKSVEEIQG</sequence>
<reference key="1">
    <citation type="journal article" date="2008" name="PLoS ONE">
        <title>Comparative analysis of Acinetobacters: three genomes for three lifestyles.</title>
        <authorList>
            <person name="Vallenet D."/>
            <person name="Nordmann P."/>
            <person name="Barbe V."/>
            <person name="Poirel L."/>
            <person name="Mangenot S."/>
            <person name="Bataille E."/>
            <person name="Dossat C."/>
            <person name="Gas S."/>
            <person name="Kreimeyer A."/>
            <person name="Lenoble P."/>
            <person name="Oztas S."/>
            <person name="Poulain J."/>
            <person name="Segurens B."/>
            <person name="Robert C."/>
            <person name="Abergel C."/>
            <person name="Claverie J.-M."/>
            <person name="Raoult D."/>
            <person name="Medigue C."/>
            <person name="Weissenbach J."/>
            <person name="Cruveiller S."/>
        </authorList>
    </citation>
    <scope>NUCLEOTIDE SEQUENCE [LARGE SCALE GENOMIC DNA]</scope>
    <source>
        <strain>AYE</strain>
    </source>
</reference>
<keyword id="KW-0687">Ribonucleoprotein</keyword>
<keyword id="KW-0689">Ribosomal protein</keyword>
<keyword id="KW-0694">RNA-binding</keyword>
<keyword id="KW-0699">rRNA-binding</keyword>
<gene>
    <name evidence="1" type="primary">rpsE</name>
    <name type="ordered locus">ABAYE0425</name>
</gene>
<protein>
    <recommendedName>
        <fullName evidence="1">Small ribosomal subunit protein uS5</fullName>
    </recommendedName>
    <alternativeName>
        <fullName evidence="2">30S ribosomal protein S5</fullName>
    </alternativeName>
</protein>
<dbReference type="EMBL" id="CU459141">
    <property type="protein sequence ID" value="CAM85399.1"/>
    <property type="molecule type" value="Genomic_DNA"/>
</dbReference>
<dbReference type="RefSeq" id="WP_001141025.1">
    <property type="nucleotide sequence ID" value="NZ_JBDGFB010000011.1"/>
</dbReference>
<dbReference type="SMR" id="B0V6W2"/>
<dbReference type="EnsemblBacteria" id="CAM85399">
    <property type="protein sequence ID" value="CAM85399"/>
    <property type="gene ID" value="ABAYE0425"/>
</dbReference>
<dbReference type="GeneID" id="92895300"/>
<dbReference type="KEGG" id="aby:ABAYE0425"/>
<dbReference type="HOGENOM" id="CLU_065898_2_2_6"/>
<dbReference type="GO" id="GO:0015935">
    <property type="term" value="C:small ribosomal subunit"/>
    <property type="evidence" value="ECO:0007669"/>
    <property type="project" value="InterPro"/>
</dbReference>
<dbReference type="GO" id="GO:0019843">
    <property type="term" value="F:rRNA binding"/>
    <property type="evidence" value="ECO:0007669"/>
    <property type="project" value="UniProtKB-UniRule"/>
</dbReference>
<dbReference type="GO" id="GO:0003735">
    <property type="term" value="F:structural constituent of ribosome"/>
    <property type="evidence" value="ECO:0007669"/>
    <property type="project" value="InterPro"/>
</dbReference>
<dbReference type="GO" id="GO:0006412">
    <property type="term" value="P:translation"/>
    <property type="evidence" value="ECO:0007669"/>
    <property type="project" value="UniProtKB-UniRule"/>
</dbReference>
<dbReference type="FunFam" id="3.30.160.20:FF:000001">
    <property type="entry name" value="30S ribosomal protein S5"/>
    <property type="match status" value="1"/>
</dbReference>
<dbReference type="FunFam" id="3.30.230.10:FF:000002">
    <property type="entry name" value="30S ribosomal protein S5"/>
    <property type="match status" value="1"/>
</dbReference>
<dbReference type="Gene3D" id="3.30.160.20">
    <property type="match status" value="1"/>
</dbReference>
<dbReference type="Gene3D" id="3.30.230.10">
    <property type="match status" value="1"/>
</dbReference>
<dbReference type="HAMAP" id="MF_01307_B">
    <property type="entry name" value="Ribosomal_uS5_B"/>
    <property type="match status" value="1"/>
</dbReference>
<dbReference type="InterPro" id="IPR020568">
    <property type="entry name" value="Ribosomal_Su5_D2-typ_SF"/>
</dbReference>
<dbReference type="InterPro" id="IPR000851">
    <property type="entry name" value="Ribosomal_uS5"/>
</dbReference>
<dbReference type="InterPro" id="IPR005712">
    <property type="entry name" value="Ribosomal_uS5_bac-type"/>
</dbReference>
<dbReference type="InterPro" id="IPR005324">
    <property type="entry name" value="Ribosomal_uS5_C"/>
</dbReference>
<dbReference type="InterPro" id="IPR013810">
    <property type="entry name" value="Ribosomal_uS5_N"/>
</dbReference>
<dbReference type="InterPro" id="IPR018192">
    <property type="entry name" value="Ribosomal_uS5_N_CS"/>
</dbReference>
<dbReference type="InterPro" id="IPR014721">
    <property type="entry name" value="Ribsml_uS5_D2-typ_fold_subgr"/>
</dbReference>
<dbReference type="NCBIfam" id="TIGR01021">
    <property type="entry name" value="rpsE_bact"/>
    <property type="match status" value="1"/>
</dbReference>
<dbReference type="PANTHER" id="PTHR48277">
    <property type="entry name" value="MITOCHONDRIAL RIBOSOMAL PROTEIN S5"/>
    <property type="match status" value="1"/>
</dbReference>
<dbReference type="PANTHER" id="PTHR48277:SF1">
    <property type="entry name" value="MITOCHONDRIAL RIBOSOMAL PROTEIN S5"/>
    <property type="match status" value="1"/>
</dbReference>
<dbReference type="Pfam" id="PF00333">
    <property type="entry name" value="Ribosomal_S5"/>
    <property type="match status" value="1"/>
</dbReference>
<dbReference type="Pfam" id="PF03719">
    <property type="entry name" value="Ribosomal_S5_C"/>
    <property type="match status" value="1"/>
</dbReference>
<dbReference type="SUPFAM" id="SSF54768">
    <property type="entry name" value="dsRNA-binding domain-like"/>
    <property type="match status" value="1"/>
</dbReference>
<dbReference type="SUPFAM" id="SSF54211">
    <property type="entry name" value="Ribosomal protein S5 domain 2-like"/>
    <property type="match status" value="1"/>
</dbReference>
<dbReference type="PROSITE" id="PS00585">
    <property type="entry name" value="RIBOSOMAL_S5"/>
    <property type="match status" value="1"/>
</dbReference>
<dbReference type="PROSITE" id="PS50881">
    <property type="entry name" value="S5_DSRBD"/>
    <property type="match status" value="1"/>
</dbReference>
<feature type="chain" id="PRO_1000140830" description="Small ribosomal subunit protein uS5">
    <location>
        <begin position="1"/>
        <end position="165"/>
    </location>
</feature>
<feature type="domain" description="S5 DRBM" evidence="1">
    <location>
        <begin position="10"/>
        <end position="73"/>
    </location>
</feature>
<evidence type="ECO:0000255" key="1">
    <source>
        <dbReference type="HAMAP-Rule" id="MF_01307"/>
    </source>
</evidence>
<evidence type="ECO:0000305" key="2"/>
<proteinExistence type="inferred from homology"/>
<comment type="function">
    <text evidence="1">With S4 and S12 plays an important role in translational accuracy.</text>
</comment>
<comment type="function">
    <text evidence="1">Located at the back of the 30S subunit body where it stabilizes the conformation of the head with respect to the body.</text>
</comment>
<comment type="subunit">
    <text evidence="1">Part of the 30S ribosomal subunit. Contacts proteins S4 and S8.</text>
</comment>
<comment type="domain">
    <text>The N-terminal domain interacts with the head of the 30S subunit; the C-terminal domain interacts with the body and contacts protein S4. The interaction surface between S4 and S5 is involved in control of translational fidelity.</text>
</comment>
<comment type="similarity">
    <text evidence="1">Belongs to the universal ribosomal protein uS5 family.</text>
</comment>
<name>RS5_ACIBY</name>